<accession>Q6BW58</accession>
<reference key="1">
    <citation type="journal article" date="2004" name="Nature">
        <title>Genome evolution in yeasts.</title>
        <authorList>
            <person name="Dujon B."/>
            <person name="Sherman D."/>
            <person name="Fischer G."/>
            <person name="Durrens P."/>
            <person name="Casaregola S."/>
            <person name="Lafontaine I."/>
            <person name="de Montigny J."/>
            <person name="Marck C."/>
            <person name="Neuveglise C."/>
            <person name="Talla E."/>
            <person name="Goffard N."/>
            <person name="Frangeul L."/>
            <person name="Aigle M."/>
            <person name="Anthouard V."/>
            <person name="Babour A."/>
            <person name="Barbe V."/>
            <person name="Barnay S."/>
            <person name="Blanchin S."/>
            <person name="Beckerich J.-M."/>
            <person name="Beyne E."/>
            <person name="Bleykasten C."/>
            <person name="Boisrame A."/>
            <person name="Boyer J."/>
            <person name="Cattolico L."/>
            <person name="Confanioleri F."/>
            <person name="de Daruvar A."/>
            <person name="Despons L."/>
            <person name="Fabre E."/>
            <person name="Fairhead C."/>
            <person name="Ferry-Dumazet H."/>
            <person name="Groppi A."/>
            <person name="Hantraye F."/>
            <person name="Hennequin C."/>
            <person name="Jauniaux N."/>
            <person name="Joyet P."/>
            <person name="Kachouri R."/>
            <person name="Kerrest A."/>
            <person name="Koszul R."/>
            <person name="Lemaire M."/>
            <person name="Lesur I."/>
            <person name="Ma L."/>
            <person name="Muller H."/>
            <person name="Nicaud J.-M."/>
            <person name="Nikolski M."/>
            <person name="Oztas S."/>
            <person name="Ozier-Kalogeropoulos O."/>
            <person name="Pellenz S."/>
            <person name="Potier S."/>
            <person name="Richard G.-F."/>
            <person name="Straub M.-L."/>
            <person name="Suleau A."/>
            <person name="Swennen D."/>
            <person name="Tekaia F."/>
            <person name="Wesolowski-Louvel M."/>
            <person name="Westhof E."/>
            <person name="Wirth B."/>
            <person name="Zeniou-Meyer M."/>
            <person name="Zivanovic Y."/>
            <person name="Bolotin-Fukuhara M."/>
            <person name="Thierry A."/>
            <person name="Bouchier C."/>
            <person name="Caudron B."/>
            <person name="Scarpelli C."/>
            <person name="Gaillardin C."/>
            <person name="Weissenbach J."/>
            <person name="Wincker P."/>
            <person name="Souciet J.-L."/>
        </authorList>
    </citation>
    <scope>NUCLEOTIDE SEQUENCE [LARGE SCALE GENOMIC DNA]</scope>
    <source>
        <strain>ATCC 36239 / CBS 767 / BCRC 21394 / JCM 1990 / NBRC 0083 / IGC 2968</strain>
    </source>
</reference>
<evidence type="ECO:0000250" key="1">
    <source>
        <dbReference type="UniProtKB" id="O74312"/>
    </source>
</evidence>
<evidence type="ECO:0000250" key="2">
    <source>
        <dbReference type="UniProtKB" id="Q12142"/>
    </source>
</evidence>
<evidence type="ECO:0000255" key="3"/>
<evidence type="ECO:0000256" key="4">
    <source>
        <dbReference type="SAM" id="MobiDB-lite"/>
    </source>
</evidence>
<evidence type="ECO:0000305" key="5"/>
<sequence>MSEYNQNSNNDTFLSRVFGLHSVYNQLQDEYQYYDPDVDYQQSFMNGGVLSSHVREEGNENTNNDNTNLLDSESDSDSSSSLSSPPSPIVSFTGKEHNQNEDSTKVHWDTTRPHYGQDNDITTSIPKDPPKKNMVNTAKNFINKLHPATDSLPMYNQPQQFRKPPPEGPSVQTVYQKKQHKSKRKYVIPPKERALYLWANITNMDEFLTDVYYYYRGNGMLNIVLTRLVDLLILAFILSFTVFLKWGINYDFFMSSSSDRASVTLKDLVIPNFISEMVPVSVKLLLLGFSGYIVLRLVQLYFDYNYKLKEIKNFYHYLIGIPNDDELMTISWIVIVERLMALKDYNSLTSTNTNLPAQFLSDLNSKVRLNAHDIANRIMRKENYIIALINKEVLDLSLSIPFLSNVNSFLSNKSVLTKTLDWNIKLCINNFIFNQHGQINSHVLKDFNRNQLSKELSARFKMAAIINLLLCPFIVIYFVLLYFFRYFNEYKSNPSSILGLRQYTPWAEWKLREFNELPHFFIKRLHLSIGPANIYINQFPRGFWVINLMNFVNFVSGAITAILVLMGLWFDNEEHNFWSFEITENKSSLFYISLFGTVWAITSSSLTSTNSNTSENLNSQTSSFFYDPEASLRYVSQFTHYLPSSWNGRLHTVQVKNEFCELFSMKIIIIINEILSLILTPFILWFKVSNSSGAIIDFFREYSIHVDGLGYVCYFAMFNFEQKDKNMMMSLNKSKKRKPRKSRANAKKKASSKSKSRSDEIELDNVNSNKADKSKLSDSETSSNSDDNDDTDINNDYYQDDKMIKSYMYFLETCGNDKAKQASKLTSNEQLSTKPSRIAKPDNSQSVVGDPTPSFLYQPLTSNSIDDSSYNINYNIDEQEEESSKGKRSGVLGMINQFYKHDRNR</sequence>
<proteinExistence type="inferred from homology"/>
<comment type="function">
    <text evidence="2">Phospholipid scramblase involved in autophagy and cytoplasm to vacuole transport (Cvt) vesicle formation. Cycles between the preautophagosomal structure/phagophore assembly site (PAS) and the cytoplasmic vesicle pool and supplies membrane for the growing autophagosome. Lipid scramblase activity plays a key role in preautophagosomal structure/phagophore assembly by distributing the phospholipids that arrive through ATG2 from the cytoplasmic to the luminal leaflet of the bilayer, thereby driving autophagosomal membrane expansion. Required for mitophagy. Also involved in endoplasmic reticulum-specific autophagic process and is essential for the survival of cells subjected to severe ER stress. Different machineries are required for anterograde trafficking to the PAS during either the Cvt pathway or bulk autophagy and for retrograde trafficking.</text>
</comment>
<comment type="catalytic activity">
    <reaction evidence="2">
        <text>a 1,2-diacyl-sn-glycero-3-phosphocholine(in) = a 1,2-diacyl-sn-glycero-3-phosphocholine(out)</text>
        <dbReference type="Rhea" id="RHEA:38571"/>
        <dbReference type="ChEBI" id="CHEBI:57643"/>
    </reaction>
</comment>
<comment type="catalytic activity">
    <reaction evidence="2">
        <text>a 1,2-diacyl-sn-glycero-3-phospho-L-serine(in) = a 1,2-diacyl-sn-glycero-3-phospho-L-serine(out)</text>
        <dbReference type="Rhea" id="RHEA:38663"/>
        <dbReference type="ChEBI" id="CHEBI:57262"/>
    </reaction>
</comment>
<comment type="catalytic activity">
    <reaction evidence="2">
        <text>a 1,2-diacyl-sn-glycero-3-phosphoethanolamine(in) = a 1,2-diacyl-sn-glycero-3-phosphoethanolamine(out)</text>
        <dbReference type="Rhea" id="RHEA:38895"/>
        <dbReference type="ChEBI" id="CHEBI:64612"/>
    </reaction>
</comment>
<comment type="catalytic activity">
    <reaction evidence="2">
        <text>a 1,2-diacyl-sn-glycero-3-phospho-(1D-myo-inositol-3-phosphate)(in) = a 1,2-diacyl-sn-glycero-3-phospho-(1D-myo-inositol-3-phosphate)(out)</text>
        <dbReference type="Rhea" id="RHEA:67920"/>
        <dbReference type="ChEBI" id="CHEBI:58088"/>
    </reaction>
</comment>
<comment type="subunit">
    <text evidence="1">Homotrimer; forms a homotrimer with a central pore that forms a path between the two membrane leaflets.</text>
</comment>
<comment type="subcellular location">
    <subcellularLocation>
        <location evidence="2">Preautophagosomal structure membrane</location>
        <topology evidence="2">Multi-pass membrane protein</topology>
    </subcellularLocation>
    <subcellularLocation>
        <location evidence="2">Cytoplasmic vesicle membrane</location>
        <topology evidence="2">Multi-pass membrane protein</topology>
    </subcellularLocation>
    <subcellularLocation>
        <location evidence="2">Golgi apparatus membrane</location>
        <topology evidence="2">Multi-pass membrane protein</topology>
    </subcellularLocation>
    <subcellularLocation>
        <location evidence="2">Endoplasmic reticulum membrane</location>
        <topology evidence="2">Multi-pass membrane protein</topology>
    </subcellularLocation>
</comment>
<comment type="domain">
    <text evidence="1">Forms a homotrimer with a solvated central pore, which is connected laterally to the cytosol through the cavity within each protomer. Acts as a lipid scramblase that uses its central pore to function: the central pore opens laterally to accommodate lipid headgroups, thereby enabling lipid flipping and redistribution of lipids added to the outer leaflet of ATG9-containing vesicles, thereby enabling growth into autophagosomes.</text>
</comment>
<comment type="PTM">
    <text evidence="2">Phosphorylated by ATG1. ATG1 phosphorylation is required for preautophagosome elongation.</text>
</comment>
<comment type="similarity">
    <text evidence="5">Belongs to the ATG9 family.</text>
</comment>
<organism>
    <name type="scientific">Debaryomyces hansenii (strain ATCC 36239 / CBS 767 / BCRC 21394 / JCM 1990 / NBRC 0083 / IGC 2968)</name>
    <name type="common">Yeast</name>
    <name type="synonym">Torulaspora hansenii</name>
    <dbReference type="NCBI Taxonomy" id="284592"/>
    <lineage>
        <taxon>Eukaryota</taxon>
        <taxon>Fungi</taxon>
        <taxon>Dikarya</taxon>
        <taxon>Ascomycota</taxon>
        <taxon>Saccharomycotina</taxon>
        <taxon>Pichiomycetes</taxon>
        <taxon>Debaryomycetaceae</taxon>
        <taxon>Debaryomyces</taxon>
    </lineage>
</organism>
<keyword id="KW-0072">Autophagy</keyword>
<keyword id="KW-0968">Cytoplasmic vesicle</keyword>
<keyword id="KW-0256">Endoplasmic reticulum</keyword>
<keyword id="KW-0333">Golgi apparatus</keyword>
<keyword id="KW-0445">Lipid transport</keyword>
<keyword id="KW-0472">Membrane</keyword>
<keyword id="KW-0597">Phosphoprotein</keyword>
<keyword id="KW-1185">Reference proteome</keyword>
<keyword id="KW-0812">Transmembrane</keyword>
<keyword id="KW-1133">Transmembrane helix</keyword>
<keyword id="KW-0813">Transport</keyword>
<feature type="chain" id="PRO_0000119830" description="Autophagy-related protein 9">
    <location>
        <begin position="1"/>
        <end position="905"/>
    </location>
</feature>
<feature type="topological domain" description="Cytoplasmic" evidence="5">
    <location>
        <begin position="1"/>
        <end position="227"/>
    </location>
</feature>
<feature type="transmembrane region" description="Helical" evidence="3">
    <location>
        <begin position="228"/>
        <end position="248"/>
    </location>
</feature>
<feature type="topological domain" description="Lumenal" evidence="5">
    <location>
        <begin position="249"/>
        <end position="272"/>
    </location>
</feature>
<feature type="transmembrane region" description="Helical" evidence="3">
    <location>
        <begin position="273"/>
        <end position="293"/>
    </location>
</feature>
<feature type="topological domain" description="Cytoplasmic" evidence="5">
    <location>
        <begin position="294"/>
        <end position="463"/>
    </location>
</feature>
<feature type="intramembrane region" evidence="1">
    <location>
        <begin position="464"/>
        <end position="484"/>
    </location>
</feature>
<feature type="topological domain" description="Cytoplasmic" evidence="5">
    <location>
        <begin position="485"/>
        <end position="549"/>
    </location>
</feature>
<feature type="transmembrane region" description="Helical" evidence="3">
    <location>
        <begin position="550"/>
        <end position="570"/>
    </location>
</feature>
<feature type="topological domain" description="Lumenal" evidence="5">
    <location>
        <begin position="571"/>
        <end position="588"/>
    </location>
</feature>
<feature type="transmembrane region" description="Helical" evidence="3">
    <location>
        <begin position="589"/>
        <end position="609"/>
    </location>
</feature>
<feature type="topological domain" description="Cytoplasmic" evidence="5">
    <location>
        <begin position="610"/>
        <end position="665"/>
    </location>
</feature>
<feature type="intramembrane region" evidence="1">
    <location>
        <begin position="666"/>
        <end position="686"/>
    </location>
</feature>
<feature type="topological domain" description="Cytoplasmic" evidence="5">
    <location>
        <begin position="687"/>
        <end position="905"/>
    </location>
</feature>
<feature type="region of interest" description="Disordered" evidence="4">
    <location>
        <begin position="55"/>
        <end position="132"/>
    </location>
</feature>
<feature type="region of interest" description="Disordered" evidence="4">
    <location>
        <begin position="731"/>
        <end position="795"/>
    </location>
</feature>
<feature type="region of interest" description="Disordered" evidence="4">
    <location>
        <begin position="821"/>
        <end position="851"/>
    </location>
</feature>
<feature type="compositionally biased region" description="Low complexity" evidence="4">
    <location>
        <begin position="60"/>
        <end position="84"/>
    </location>
</feature>
<feature type="compositionally biased region" description="Basic and acidic residues" evidence="4">
    <location>
        <begin position="94"/>
        <end position="117"/>
    </location>
</feature>
<feature type="compositionally biased region" description="Basic residues" evidence="4">
    <location>
        <begin position="733"/>
        <end position="755"/>
    </location>
</feature>
<feature type="compositionally biased region" description="Polar residues" evidence="4">
    <location>
        <begin position="823"/>
        <end position="835"/>
    </location>
</feature>
<protein>
    <recommendedName>
        <fullName>Autophagy-related protein 9</fullName>
    </recommendedName>
</protein>
<name>ATG9_DEBHA</name>
<gene>
    <name type="primary">ATG9</name>
    <name type="ordered locus">DEHA2B14168g</name>
</gene>
<dbReference type="EMBL" id="CR382134">
    <property type="protein sequence ID" value="CAG85572.2"/>
    <property type="molecule type" value="Genomic_DNA"/>
</dbReference>
<dbReference type="RefSeq" id="XP_457561.2">
    <property type="nucleotide sequence ID" value="XM_457561.1"/>
</dbReference>
<dbReference type="SMR" id="Q6BW58"/>
<dbReference type="FunCoup" id="Q6BW58">
    <property type="interactions" value="256"/>
</dbReference>
<dbReference type="STRING" id="284592.Q6BW58"/>
<dbReference type="GeneID" id="2913524"/>
<dbReference type="KEGG" id="dha:DEHA2B14168g"/>
<dbReference type="VEuPathDB" id="FungiDB:DEHA2B14168g"/>
<dbReference type="eggNOG" id="KOG2173">
    <property type="taxonomic scope" value="Eukaryota"/>
</dbReference>
<dbReference type="HOGENOM" id="CLU_006200_1_0_1"/>
<dbReference type="InParanoid" id="Q6BW58"/>
<dbReference type="OMA" id="ELMTISW"/>
<dbReference type="OrthoDB" id="2020634at2759"/>
<dbReference type="Proteomes" id="UP000000599">
    <property type="component" value="Chromosome B"/>
</dbReference>
<dbReference type="GO" id="GO:0005776">
    <property type="term" value="C:autophagosome"/>
    <property type="evidence" value="ECO:0007669"/>
    <property type="project" value="TreeGrafter"/>
</dbReference>
<dbReference type="GO" id="GO:0030659">
    <property type="term" value="C:cytoplasmic vesicle membrane"/>
    <property type="evidence" value="ECO:0007669"/>
    <property type="project" value="UniProtKB-SubCell"/>
</dbReference>
<dbReference type="GO" id="GO:0005789">
    <property type="term" value="C:endoplasmic reticulum membrane"/>
    <property type="evidence" value="ECO:0007669"/>
    <property type="project" value="UniProtKB-SubCell"/>
</dbReference>
<dbReference type="GO" id="GO:0000139">
    <property type="term" value="C:Golgi membrane"/>
    <property type="evidence" value="ECO:0007669"/>
    <property type="project" value="UniProtKB-SubCell"/>
</dbReference>
<dbReference type="GO" id="GO:0034045">
    <property type="term" value="C:phagophore assembly site membrane"/>
    <property type="evidence" value="ECO:0007669"/>
    <property type="project" value="UniProtKB-SubCell"/>
</dbReference>
<dbReference type="GO" id="GO:0000422">
    <property type="term" value="P:autophagy of mitochondrion"/>
    <property type="evidence" value="ECO:0007669"/>
    <property type="project" value="TreeGrafter"/>
</dbReference>
<dbReference type="GO" id="GO:0006869">
    <property type="term" value="P:lipid transport"/>
    <property type="evidence" value="ECO:0007669"/>
    <property type="project" value="UniProtKB-KW"/>
</dbReference>
<dbReference type="GO" id="GO:0034727">
    <property type="term" value="P:piecemeal microautophagy of the nucleus"/>
    <property type="evidence" value="ECO:0007669"/>
    <property type="project" value="TreeGrafter"/>
</dbReference>
<dbReference type="GO" id="GO:0034497">
    <property type="term" value="P:protein localization to phagophore assembly site"/>
    <property type="evidence" value="ECO:0007669"/>
    <property type="project" value="TreeGrafter"/>
</dbReference>
<dbReference type="GO" id="GO:0061709">
    <property type="term" value="P:reticulophagy"/>
    <property type="evidence" value="ECO:0007669"/>
    <property type="project" value="TreeGrafter"/>
</dbReference>
<dbReference type="InterPro" id="IPR007241">
    <property type="entry name" value="Autophagy-rel_prot_9"/>
</dbReference>
<dbReference type="PANTHER" id="PTHR13038">
    <property type="entry name" value="APG9 AUTOPHAGY 9"/>
    <property type="match status" value="1"/>
</dbReference>
<dbReference type="PANTHER" id="PTHR13038:SF10">
    <property type="entry name" value="AUTOPHAGY-RELATED PROTEIN 9"/>
    <property type="match status" value="1"/>
</dbReference>
<dbReference type="Pfam" id="PF04109">
    <property type="entry name" value="ATG9"/>
    <property type="match status" value="1"/>
</dbReference>